<evidence type="ECO:0000255" key="1">
    <source>
        <dbReference type="HAMAP-Rule" id="MF_01454"/>
    </source>
</evidence>
<evidence type="ECO:0000255" key="2">
    <source>
        <dbReference type="PROSITE-ProRule" id="PRU01231"/>
    </source>
</evidence>
<evidence type="ECO:0000256" key="3">
    <source>
        <dbReference type="SAM" id="MobiDB-lite"/>
    </source>
</evidence>
<name>OBG_METPP</name>
<accession>A2SD36</accession>
<reference key="1">
    <citation type="journal article" date="2007" name="J. Bacteriol.">
        <title>Whole-genome analysis of the methyl tert-butyl ether-degrading beta-proteobacterium Methylibium petroleiphilum PM1.</title>
        <authorList>
            <person name="Kane S.R."/>
            <person name="Chakicherla A.Y."/>
            <person name="Chain P.S.G."/>
            <person name="Schmidt R."/>
            <person name="Shin M.W."/>
            <person name="Legler T.C."/>
            <person name="Scow K.M."/>
            <person name="Larimer F.W."/>
            <person name="Lucas S.M."/>
            <person name="Richardson P.M."/>
            <person name="Hristova K.R."/>
        </authorList>
    </citation>
    <scope>NUCLEOTIDE SEQUENCE [LARGE SCALE GENOMIC DNA]</scope>
    <source>
        <strain>ATCC BAA-1232 / LMG 22953 / PM1</strain>
    </source>
</reference>
<proteinExistence type="inferred from homology"/>
<keyword id="KW-0963">Cytoplasm</keyword>
<keyword id="KW-0342">GTP-binding</keyword>
<keyword id="KW-0378">Hydrolase</keyword>
<keyword id="KW-0460">Magnesium</keyword>
<keyword id="KW-0479">Metal-binding</keyword>
<keyword id="KW-0547">Nucleotide-binding</keyword>
<keyword id="KW-1185">Reference proteome</keyword>
<feature type="chain" id="PRO_0000386037" description="GTPase Obg">
    <location>
        <begin position="1"/>
        <end position="370"/>
    </location>
</feature>
<feature type="domain" description="Obg" evidence="2">
    <location>
        <begin position="1"/>
        <end position="159"/>
    </location>
</feature>
<feature type="domain" description="OBG-type G" evidence="1">
    <location>
        <begin position="160"/>
        <end position="333"/>
    </location>
</feature>
<feature type="region of interest" description="Disordered" evidence="3">
    <location>
        <begin position="346"/>
        <end position="370"/>
    </location>
</feature>
<feature type="binding site" evidence="1">
    <location>
        <begin position="166"/>
        <end position="173"/>
    </location>
    <ligand>
        <name>GTP</name>
        <dbReference type="ChEBI" id="CHEBI:37565"/>
    </ligand>
</feature>
<feature type="binding site" evidence="1">
    <location>
        <position position="173"/>
    </location>
    <ligand>
        <name>Mg(2+)</name>
        <dbReference type="ChEBI" id="CHEBI:18420"/>
    </ligand>
</feature>
<feature type="binding site" evidence="1">
    <location>
        <begin position="191"/>
        <end position="195"/>
    </location>
    <ligand>
        <name>GTP</name>
        <dbReference type="ChEBI" id="CHEBI:37565"/>
    </ligand>
</feature>
<feature type="binding site" evidence="1">
    <location>
        <position position="193"/>
    </location>
    <ligand>
        <name>Mg(2+)</name>
        <dbReference type="ChEBI" id="CHEBI:18420"/>
    </ligand>
</feature>
<feature type="binding site" evidence="1">
    <location>
        <begin position="213"/>
        <end position="216"/>
    </location>
    <ligand>
        <name>GTP</name>
        <dbReference type="ChEBI" id="CHEBI:37565"/>
    </ligand>
</feature>
<feature type="binding site" evidence="1">
    <location>
        <begin position="283"/>
        <end position="286"/>
    </location>
    <ligand>
        <name>GTP</name>
        <dbReference type="ChEBI" id="CHEBI:37565"/>
    </ligand>
</feature>
<feature type="binding site" evidence="1">
    <location>
        <begin position="314"/>
        <end position="316"/>
    </location>
    <ligand>
        <name>GTP</name>
        <dbReference type="ChEBI" id="CHEBI:37565"/>
    </ligand>
</feature>
<protein>
    <recommendedName>
        <fullName evidence="1">GTPase Obg</fullName>
        <ecNumber evidence="1">3.6.5.-</ecNumber>
    </recommendedName>
    <alternativeName>
        <fullName evidence="1">GTP-binding protein Obg</fullName>
    </alternativeName>
</protein>
<gene>
    <name evidence="1" type="primary">obg</name>
    <name type="ordered locus">Mpe_A0513</name>
</gene>
<dbReference type="EC" id="3.6.5.-" evidence="1"/>
<dbReference type="EMBL" id="CP000555">
    <property type="protein sequence ID" value="ABM93475.1"/>
    <property type="molecule type" value="Genomic_DNA"/>
</dbReference>
<dbReference type="SMR" id="A2SD36"/>
<dbReference type="STRING" id="420662.Mpe_A0513"/>
<dbReference type="KEGG" id="mpt:Mpe_A0513"/>
<dbReference type="eggNOG" id="COG0536">
    <property type="taxonomic scope" value="Bacteria"/>
</dbReference>
<dbReference type="HOGENOM" id="CLU_011747_2_0_4"/>
<dbReference type="Proteomes" id="UP000000366">
    <property type="component" value="Chromosome"/>
</dbReference>
<dbReference type="GO" id="GO:0005737">
    <property type="term" value="C:cytoplasm"/>
    <property type="evidence" value="ECO:0007669"/>
    <property type="project" value="UniProtKB-SubCell"/>
</dbReference>
<dbReference type="GO" id="GO:0005525">
    <property type="term" value="F:GTP binding"/>
    <property type="evidence" value="ECO:0007669"/>
    <property type="project" value="UniProtKB-UniRule"/>
</dbReference>
<dbReference type="GO" id="GO:0003924">
    <property type="term" value="F:GTPase activity"/>
    <property type="evidence" value="ECO:0007669"/>
    <property type="project" value="UniProtKB-UniRule"/>
</dbReference>
<dbReference type="GO" id="GO:0000287">
    <property type="term" value="F:magnesium ion binding"/>
    <property type="evidence" value="ECO:0007669"/>
    <property type="project" value="InterPro"/>
</dbReference>
<dbReference type="GO" id="GO:0042254">
    <property type="term" value="P:ribosome biogenesis"/>
    <property type="evidence" value="ECO:0007669"/>
    <property type="project" value="UniProtKB-UniRule"/>
</dbReference>
<dbReference type="CDD" id="cd01898">
    <property type="entry name" value="Obg"/>
    <property type="match status" value="1"/>
</dbReference>
<dbReference type="FunFam" id="2.70.210.12:FF:000001">
    <property type="entry name" value="GTPase Obg"/>
    <property type="match status" value="1"/>
</dbReference>
<dbReference type="Gene3D" id="2.70.210.12">
    <property type="entry name" value="GTP1/OBG domain"/>
    <property type="match status" value="1"/>
</dbReference>
<dbReference type="Gene3D" id="3.40.50.300">
    <property type="entry name" value="P-loop containing nucleotide triphosphate hydrolases"/>
    <property type="match status" value="1"/>
</dbReference>
<dbReference type="HAMAP" id="MF_01454">
    <property type="entry name" value="GTPase_Obg"/>
    <property type="match status" value="1"/>
</dbReference>
<dbReference type="InterPro" id="IPR031167">
    <property type="entry name" value="G_OBG"/>
</dbReference>
<dbReference type="InterPro" id="IPR006073">
    <property type="entry name" value="GTP-bd"/>
</dbReference>
<dbReference type="InterPro" id="IPR014100">
    <property type="entry name" value="GTP-bd_Obg/CgtA"/>
</dbReference>
<dbReference type="InterPro" id="IPR006074">
    <property type="entry name" value="GTP1-OBG_CS"/>
</dbReference>
<dbReference type="InterPro" id="IPR006169">
    <property type="entry name" value="GTP1_OBG_dom"/>
</dbReference>
<dbReference type="InterPro" id="IPR036726">
    <property type="entry name" value="GTP1_OBG_dom_sf"/>
</dbReference>
<dbReference type="InterPro" id="IPR045086">
    <property type="entry name" value="OBG_GTPase"/>
</dbReference>
<dbReference type="InterPro" id="IPR027417">
    <property type="entry name" value="P-loop_NTPase"/>
</dbReference>
<dbReference type="InterPro" id="IPR005225">
    <property type="entry name" value="Small_GTP-bd"/>
</dbReference>
<dbReference type="NCBIfam" id="TIGR02729">
    <property type="entry name" value="Obg_CgtA"/>
    <property type="match status" value="1"/>
</dbReference>
<dbReference type="NCBIfam" id="NF008954">
    <property type="entry name" value="PRK12296.1"/>
    <property type="match status" value="1"/>
</dbReference>
<dbReference type="NCBIfam" id="NF008955">
    <property type="entry name" value="PRK12297.1"/>
    <property type="match status" value="1"/>
</dbReference>
<dbReference type="NCBIfam" id="NF008956">
    <property type="entry name" value="PRK12299.1"/>
    <property type="match status" value="1"/>
</dbReference>
<dbReference type="NCBIfam" id="TIGR00231">
    <property type="entry name" value="small_GTP"/>
    <property type="match status" value="1"/>
</dbReference>
<dbReference type="PANTHER" id="PTHR11702">
    <property type="entry name" value="DEVELOPMENTALLY REGULATED GTP-BINDING PROTEIN-RELATED"/>
    <property type="match status" value="1"/>
</dbReference>
<dbReference type="PANTHER" id="PTHR11702:SF31">
    <property type="entry name" value="MITOCHONDRIAL RIBOSOME-ASSOCIATED GTPASE 2"/>
    <property type="match status" value="1"/>
</dbReference>
<dbReference type="Pfam" id="PF01018">
    <property type="entry name" value="GTP1_OBG"/>
    <property type="match status" value="1"/>
</dbReference>
<dbReference type="Pfam" id="PF01926">
    <property type="entry name" value="MMR_HSR1"/>
    <property type="match status" value="1"/>
</dbReference>
<dbReference type="PIRSF" id="PIRSF002401">
    <property type="entry name" value="GTP_bd_Obg/CgtA"/>
    <property type="match status" value="1"/>
</dbReference>
<dbReference type="PRINTS" id="PR00326">
    <property type="entry name" value="GTP1OBG"/>
</dbReference>
<dbReference type="SUPFAM" id="SSF82051">
    <property type="entry name" value="Obg GTP-binding protein N-terminal domain"/>
    <property type="match status" value="1"/>
</dbReference>
<dbReference type="SUPFAM" id="SSF52540">
    <property type="entry name" value="P-loop containing nucleoside triphosphate hydrolases"/>
    <property type="match status" value="1"/>
</dbReference>
<dbReference type="PROSITE" id="PS51710">
    <property type="entry name" value="G_OBG"/>
    <property type="match status" value="1"/>
</dbReference>
<dbReference type="PROSITE" id="PS00905">
    <property type="entry name" value="GTP1_OBG"/>
    <property type="match status" value="1"/>
</dbReference>
<dbReference type="PROSITE" id="PS51883">
    <property type="entry name" value="OBG"/>
    <property type="match status" value="1"/>
</dbReference>
<comment type="function">
    <text evidence="1">An essential GTPase which binds GTP, GDP and possibly (p)ppGpp with moderate affinity, with high nucleotide exchange rates and a fairly low GTP hydrolysis rate. Plays a role in control of the cell cycle, stress response, ribosome biogenesis and in those bacteria that undergo differentiation, in morphogenesis control.</text>
</comment>
<comment type="cofactor">
    <cofactor evidence="1">
        <name>Mg(2+)</name>
        <dbReference type="ChEBI" id="CHEBI:18420"/>
    </cofactor>
</comment>
<comment type="subunit">
    <text evidence="1">Monomer.</text>
</comment>
<comment type="subcellular location">
    <subcellularLocation>
        <location evidence="1">Cytoplasm</location>
    </subcellularLocation>
</comment>
<comment type="similarity">
    <text evidence="1">Belongs to the TRAFAC class OBG-HflX-like GTPase superfamily. OBG GTPase family.</text>
</comment>
<organism>
    <name type="scientific">Methylibium petroleiphilum (strain ATCC BAA-1232 / LMG 22953 / PM1)</name>
    <dbReference type="NCBI Taxonomy" id="420662"/>
    <lineage>
        <taxon>Bacteria</taxon>
        <taxon>Pseudomonadati</taxon>
        <taxon>Pseudomonadota</taxon>
        <taxon>Betaproteobacteria</taxon>
        <taxon>Burkholderiales</taxon>
        <taxon>Sphaerotilaceae</taxon>
        <taxon>Methylibium</taxon>
    </lineage>
</organism>
<sequence>MKFVDEAYIDVIAGNGGNGCVSFRREKFIPFGGPNGGDGGRGGSVYAVADRNLNTLIDFRFARRHEARHGEHGRGSDQFGAAAEDIVMRMPVGTIISDAETGAPVAELLEPGERILIAKGGDGGFGNLHYKTSTNRAPRQKTPGWPGEQKKLKLELRVLADVGLLGMPNAGKSTLISAISNARPKIADYPFTTLHPNLGVVRVGPEQSFVVADVPGLIEGAAEGAGLGHRFLRHLQRTRLLLHMIDMAPFDDTDPVAQAKAIVAELKKYDPALYDKPRWLVLNKLDVVPAEERAARVKDFVKRFKWKGPVFEISALTREGCETLVQAIYQHVASYQTHYVDPDVRFAEPEADESDDEPRFAPQADDPRFR</sequence>